<reference evidence="5" key="1">
    <citation type="journal article" date="2012" name="Syst. Biol.">
        <title>Peptidomics-based phylogeny and biogeography of Mantophasmatodea (Hexapoda).</title>
        <authorList>
            <person name="Predel R."/>
            <person name="Neupert S."/>
            <person name="Huetteroth W."/>
            <person name="Kahnt J."/>
            <person name="Waidelich D."/>
            <person name="Roth S."/>
        </authorList>
    </citation>
    <scope>PROTEIN SEQUENCE</scope>
    <source>
        <tissue evidence="3">Thoracic perisympathetic organs</tissue>
    </source>
</reference>
<dbReference type="GO" id="GO:0005576">
    <property type="term" value="C:extracellular region"/>
    <property type="evidence" value="ECO:0007669"/>
    <property type="project" value="UniProtKB-SubCell"/>
</dbReference>
<dbReference type="GO" id="GO:0007218">
    <property type="term" value="P:neuropeptide signaling pathway"/>
    <property type="evidence" value="ECO:0007669"/>
    <property type="project" value="UniProtKB-KW"/>
</dbReference>
<sequence>PAPDSSFIRDP</sequence>
<evidence type="ECO:0000250" key="1">
    <source>
        <dbReference type="UniProtKB" id="P34405"/>
    </source>
</evidence>
<evidence type="ECO:0000255" key="2"/>
<evidence type="ECO:0000269" key="3">
    <source>
    </source>
</evidence>
<evidence type="ECO:0000303" key="4">
    <source>
    </source>
</evidence>
<evidence type="ECO:0000305" key="5"/>
<evidence type="ECO:0000305" key="6">
    <source>
    </source>
</evidence>
<organism>
    <name type="scientific">Lobatophasma redelinghuysense</name>
    <name type="common">Gladiator</name>
    <name type="synonym">Heel-walker</name>
    <dbReference type="NCBI Taxonomy" id="253128"/>
    <lineage>
        <taxon>Eukaryota</taxon>
        <taxon>Metazoa</taxon>
        <taxon>Ecdysozoa</taxon>
        <taxon>Arthropoda</taxon>
        <taxon>Hexapoda</taxon>
        <taxon>Insecta</taxon>
        <taxon>Pterygota</taxon>
        <taxon>Neoptera</taxon>
        <taxon>Polyneoptera</taxon>
        <taxon>Mantophasmatodea</taxon>
        <taxon>Austrophasmatidae</taxon>
        <taxon>Lobatophasma</taxon>
    </lineage>
</organism>
<protein>
    <recommendedName>
        <fullName evidence="4">Extended FMRFamide-10</fullName>
        <shortName evidence="4">FMRFa-10</shortName>
    </recommendedName>
</protein>
<comment type="function">
    <text evidence="1">FMRFamides and FMRFamide-like peptides are neuropeptides.</text>
</comment>
<comment type="subcellular location">
    <subcellularLocation>
        <location evidence="6">Secreted</location>
    </subcellularLocation>
</comment>
<comment type="similarity">
    <text evidence="2">Belongs to the FARP (FMRF amide related peptide) family.</text>
</comment>
<accession>B3A089</accession>
<feature type="peptide" id="PRO_0000421552" description="Extended FMRFamide-10" evidence="3">
    <location>
        <begin position="1"/>
        <end position="11"/>
    </location>
</feature>
<name>FAR10_LOBRE</name>
<keyword id="KW-0903">Direct protein sequencing</keyword>
<keyword id="KW-0527">Neuropeptide</keyword>
<keyword id="KW-0964">Secreted</keyword>
<proteinExistence type="evidence at protein level"/>